<comment type="function">
    <text evidence="1">In eubacteria ppGpp (guanosine 3'-diphosphate 5'-diphosphate) is a mediator of the stringent response that coordinates a variety of cellular activities in response to changes in nutritional abundance.</text>
</comment>
<comment type="catalytic activity">
    <reaction>
        <text>guanosine 3',5'-bis(diphosphate) + H2O = GDP + diphosphate + H(+)</text>
        <dbReference type="Rhea" id="RHEA:14253"/>
        <dbReference type="ChEBI" id="CHEBI:15377"/>
        <dbReference type="ChEBI" id="CHEBI:15378"/>
        <dbReference type="ChEBI" id="CHEBI:33019"/>
        <dbReference type="ChEBI" id="CHEBI:58189"/>
        <dbReference type="ChEBI" id="CHEBI:77828"/>
        <dbReference type="EC" id="3.1.7.2"/>
    </reaction>
</comment>
<comment type="cofactor">
    <cofactor evidence="1">
        <name>Mn(2+)</name>
        <dbReference type="ChEBI" id="CHEBI:29035"/>
    </cofactor>
</comment>
<comment type="pathway">
    <text>Purine metabolism; ppGpp biosynthesis; ppGpp from GDP: step 1/1.</text>
</comment>
<comment type="subunit">
    <text evidence="5">Interacts with CgtA/Obg (AC Q9KUS8) in a yeast 2-hybrid assay.</text>
</comment>
<comment type="disruption phenotype">
    <text evidence="5">Essential for growth, it cannot be disrupted. It can be disrupted in a relA deletion strain (relA phosphorylates GTP to ppGpp).</text>
</comment>
<comment type="similarity">
    <text evidence="6">Belongs to the RelA/SpoT family.</text>
</comment>
<gene>
    <name type="primary">spoT</name>
    <name type="ordered locus">VC_2710</name>
</gene>
<reference key="1">
    <citation type="journal article" date="2000" name="Nature">
        <title>DNA sequence of both chromosomes of the cholera pathogen Vibrio cholerae.</title>
        <authorList>
            <person name="Heidelberg J.F."/>
            <person name="Eisen J.A."/>
            <person name="Nelson W.C."/>
            <person name="Clayton R.A."/>
            <person name="Gwinn M.L."/>
            <person name="Dodson R.J."/>
            <person name="Haft D.H."/>
            <person name="Hickey E.K."/>
            <person name="Peterson J.D."/>
            <person name="Umayam L.A."/>
            <person name="Gill S.R."/>
            <person name="Nelson K.E."/>
            <person name="Read T.D."/>
            <person name="Tettelin H."/>
            <person name="Richardson D.L."/>
            <person name="Ermolaeva M.D."/>
            <person name="Vamathevan J.J."/>
            <person name="Bass S."/>
            <person name="Qin H."/>
            <person name="Dragoi I."/>
            <person name="Sellers P."/>
            <person name="McDonald L.A."/>
            <person name="Utterback T.R."/>
            <person name="Fleischmann R.D."/>
            <person name="Nierman W.C."/>
            <person name="White O."/>
            <person name="Salzberg S.L."/>
            <person name="Smith H.O."/>
            <person name="Colwell R.R."/>
            <person name="Mekalanos J.J."/>
            <person name="Venter J.C."/>
            <person name="Fraser C.M."/>
        </authorList>
    </citation>
    <scope>NUCLEOTIDE SEQUENCE [LARGE SCALE GENOMIC DNA]</scope>
    <source>
        <strain>ATCC 39315 / El Tor Inaba N16961</strain>
    </source>
</reference>
<reference key="2">
    <citation type="journal article" date="2007" name="Proc. Natl. Acad. Sci. U.S.A.">
        <title>Regulation of the stringent response is the essential function of the conserved bacterial G protein CgtA in Vibrio cholerae.</title>
        <authorList>
            <person name="Raskin D.M."/>
            <person name="Judson N."/>
            <person name="Mekalanos J.J."/>
        </authorList>
    </citation>
    <scope>SUBUNIT</scope>
    <scope>DISRUPTION PHENOTYPE</scope>
    <source>
        <strain>ATCC 39315 / El Tor Inaba N16961</strain>
    </source>
</reference>
<dbReference type="EC" id="3.1.7.2"/>
<dbReference type="EMBL" id="AE003852">
    <property type="protein sequence ID" value="AAF95850.1"/>
    <property type="molecule type" value="Genomic_DNA"/>
</dbReference>
<dbReference type="PIR" id="B82044">
    <property type="entry name" value="B82044"/>
</dbReference>
<dbReference type="RefSeq" id="NP_232337.1">
    <property type="nucleotide sequence ID" value="NC_002505.1"/>
</dbReference>
<dbReference type="RefSeq" id="WP_010895463.1">
    <property type="nucleotide sequence ID" value="NC_002505.1"/>
</dbReference>
<dbReference type="SMR" id="Q9KNM2"/>
<dbReference type="DIP" id="DIP-60892N"/>
<dbReference type="IntAct" id="Q9KNM2">
    <property type="interactions" value="1"/>
</dbReference>
<dbReference type="STRING" id="243277.VC_2710"/>
<dbReference type="DNASU" id="2615538"/>
<dbReference type="EnsemblBacteria" id="AAF95850">
    <property type="protein sequence ID" value="AAF95850"/>
    <property type="gene ID" value="VC_2710"/>
</dbReference>
<dbReference type="KEGG" id="vch:VC_2710"/>
<dbReference type="PATRIC" id="fig|243277.26.peg.2585"/>
<dbReference type="eggNOG" id="COG0317">
    <property type="taxonomic scope" value="Bacteria"/>
</dbReference>
<dbReference type="HOGENOM" id="CLU_012300_3_0_6"/>
<dbReference type="UniPathway" id="UPA00908">
    <property type="reaction ID" value="UER00886"/>
</dbReference>
<dbReference type="PHI-base" id="PHI:4167"/>
<dbReference type="Proteomes" id="UP000000584">
    <property type="component" value="Chromosome 1"/>
</dbReference>
<dbReference type="GO" id="GO:0008728">
    <property type="term" value="F:GTP diphosphokinase activity"/>
    <property type="evidence" value="ECO:0000318"/>
    <property type="project" value="GO_Central"/>
</dbReference>
<dbReference type="GO" id="GO:0008893">
    <property type="term" value="F:guanosine-3',5'-bis(diphosphate) 3'-diphosphatase activity"/>
    <property type="evidence" value="ECO:0000318"/>
    <property type="project" value="GO_Central"/>
</dbReference>
<dbReference type="GO" id="GO:0015970">
    <property type="term" value="P:guanosine tetraphosphate biosynthetic process"/>
    <property type="evidence" value="ECO:0007669"/>
    <property type="project" value="UniProtKB-UniPathway"/>
</dbReference>
<dbReference type="GO" id="GO:0015969">
    <property type="term" value="P:guanosine tetraphosphate metabolic process"/>
    <property type="evidence" value="ECO:0000318"/>
    <property type="project" value="GO_Central"/>
</dbReference>
<dbReference type="GO" id="GO:0042594">
    <property type="term" value="P:response to starvation"/>
    <property type="evidence" value="ECO:0000318"/>
    <property type="project" value="GO_Central"/>
</dbReference>
<dbReference type="CDD" id="cd04876">
    <property type="entry name" value="ACT_RelA-SpoT"/>
    <property type="match status" value="1"/>
</dbReference>
<dbReference type="CDD" id="cd00077">
    <property type="entry name" value="HDc"/>
    <property type="match status" value="1"/>
</dbReference>
<dbReference type="CDD" id="cd05399">
    <property type="entry name" value="NT_Rel-Spo_like"/>
    <property type="match status" value="1"/>
</dbReference>
<dbReference type="CDD" id="cd01668">
    <property type="entry name" value="TGS_RSH"/>
    <property type="match status" value="1"/>
</dbReference>
<dbReference type="FunFam" id="3.30.70.260:FF:000006">
    <property type="entry name" value="(P)ppGpp synthase/hydrolase SpoT"/>
    <property type="match status" value="1"/>
</dbReference>
<dbReference type="FunFam" id="3.10.20.30:FF:000002">
    <property type="entry name" value="GTP pyrophosphokinase (RelA/SpoT)"/>
    <property type="match status" value="1"/>
</dbReference>
<dbReference type="FunFam" id="1.10.3210.10:FF:000001">
    <property type="entry name" value="GTP pyrophosphokinase RelA"/>
    <property type="match status" value="1"/>
</dbReference>
<dbReference type="FunFam" id="3.30.460.10:FF:000001">
    <property type="entry name" value="GTP pyrophosphokinase RelA"/>
    <property type="match status" value="1"/>
</dbReference>
<dbReference type="Gene3D" id="3.10.20.30">
    <property type="match status" value="1"/>
</dbReference>
<dbReference type="Gene3D" id="3.30.70.260">
    <property type="match status" value="1"/>
</dbReference>
<dbReference type="Gene3D" id="3.30.460.10">
    <property type="entry name" value="Beta Polymerase, domain 2"/>
    <property type="match status" value="1"/>
</dbReference>
<dbReference type="Gene3D" id="1.10.3210.10">
    <property type="entry name" value="Hypothetical protein af1432"/>
    <property type="match status" value="1"/>
</dbReference>
<dbReference type="InterPro" id="IPR045865">
    <property type="entry name" value="ACT-like_dom_sf"/>
</dbReference>
<dbReference type="InterPro" id="IPR002912">
    <property type="entry name" value="ACT_dom"/>
</dbReference>
<dbReference type="InterPro" id="IPR012675">
    <property type="entry name" value="Beta-grasp_dom_sf"/>
</dbReference>
<dbReference type="InterPro" id="IPR003607">
    <property type="entry name" value="HD/PDEase_dom"/>
</dbReference>
<dbReference type="InterPro" id="IPR006674">
    <property type="entry name" value="HD_domain"/>
</dbReference>
<dbReference type="InterPro" id="IPR043519">
    <property type="entry name" value="NT_sf"/>
</dbReference>
<dbReference type="InterPro" id="IPR004811">
    <property type="entry name" value="RelA/Spo_fam"/>
</dbReference>
<dbReference type="InterPro" id="IPR045600">
    <property type="entry name" value="RelA/SpoT_AH_RIS"/>
</dbReference>
<dbReference type="InterPro" id="IPR007685">
    <property type="entry name" value="RelA_SpoT"/>
</dbReference>
<dbReference type="InterPro" id="IPR004095">
    <property type="entry name" value="TGS"/>
</dbReference>
<dbReference type="InterPro" id="IPR012676">
    <property type="entry name" value="TGS-like"/>
</dbReference>
<dbReference type="InterPro" id="IPR033655">
    <property type="entry name" value="TGS_RelA/SpoT"/>
</dbReference>
<dbReference type="NCBIfam" id="NF008303">
    <property type="entry name" value="PRK11092.1"/>
    <property type="match status" value="1"/>
</dbReference>
<dbReference type="NCBIfam" id="TIGR00691">
    <property type="entry name" value="spoT_relA"/>
    <property type="match status" value="1"/>
</dbReference>
<dbReference type="PANTHER" id="PTHR21262:SF36">
    <property type="entry name" value="BIFUNCTIONAL (P)PPGPP SYNTHASE_HYDROLASE SPOT"/>
    <property type="match status" value="1"/>
</dbReference>
<dbReference type="PANTHER" id="PTHR21262">
    <property type="entry name" value="GUANOSINE-3',5'-BIS DIPHOSPHATE 3'-PYROPHOSPHOHYDROLASE"/>
    <property type="match status" value="1"/>
</dbReference>
<dbReference type="Pfam" id="PF13291">
    <property type="entry name" value="ACT_4"/>
    <property type="match status" value="1"/>
</dbReference>
<dbReference type="Pfam" id="PF13328">
    <property type="entry name" value="HD_4"/>
    <property type="match status" value="1"/>
</dbReference>
<dbReference type="Pfam" id="PF19296">
    <property type="entry name" value="RelA_AH_RIS"/>
    <property type="match status" value="1"/>
</dbReference>
<dbReference type="Pfam" id="PF04607">
    <property type="entry name" value="RelA_SpoT"/>
    <property type="match status" value="1"/>
</dbReference>
<dbReference type="Pfam" id="PF02824">
    <property type="entry name" value="TGS"/>
    <property type="match status" value="1"/>
</dbReference>
<dbReference type="SMART" id="SM00471">
    <property type="entry name" value="HDc"/>
    <property type="match status" value="1"/>
</dbReference>
<dbReference type="SMART" id="SM00954">
    <property type="entry name" value="RelA_SpoT"/>
    <property type="match status" value="1"/>
</dbReference>
<dbReference type="SUPFAM" id="SSF55021">
    <property type="entry name" value="ACT-like"/>
    <property type="match status" value="1"/>
</dbReference>
<dbReference type="SUPFAM" id="SSF109604">
    <property type="entry name" value="HD-domain/PDEase-like"/>
    <property type="match status" value="1"/>
</dbReference>
<dbReference type="SUPFAM" id="SSF81301">
    <property type="entry name" value="Nucleotidyltransferase"/>
    <property type="match status" value="1"/>
</dbReference>
<dbReference type="SUPFAM" id="SSF81271">
    <property type="entry name" value="TGS-like"/>
    <property type="match status" value="1"/>
</dbReference>
<dbReference type="PROSITE" id="PS51671">
    <property type="entry name" value="ACT"/>
    <property type="match status" value="1"/>
</dbReference>
<dbReference type="PROSITE" id="PS51831">
    <property type="entry name" value="HD"/>
    <property type="match status" value="1"/>
</dbReference>
<dbReference type="PROSITE" id="PS51880">
    <property type="entry name" value="TGS"/>
    <property type="match status" value="1"/>
</dbReference>
<evidence type="ECO:0000250" key="1"/>
<evidence type="ECO:0000255" key="2">
    <source>
        <dbReference type="PROSITE-ProRule" id="PRU01007"/>
    </source>
</evidence>
<evidence type="ECO:0000255" key="3">
    <source>
        <dbReference type="PROSITE-ProRule" id="PRU01175"/>
    </source>
</evidence>
<evidence type="ECO:0000255" key="4">
    <source>
        <dbReference type="PROSITE-ProRule" id="PRU01228"/>
    </source>
</evidence>
<evidence type="ECO:0000269" key="5">
    <source>
    </source>
</evidence>
<evidence type="ECO:0000305" key="6"/>
<keyword id="KW-0378">Hydrolase</keyword>
<keyword id="KW-0464">Manganese</keyword>
<keyword id="KW-1185">Reference proteome</keyword>
<accession>Q9KNM2</accession>
<sequence>MYLFDSLKDVAQEYLTEPQIEALRQSYVVARDAHEGQTRSSGEPYIIHPVAVARILAEMRLDLETLQAALLHDVIEDCDVTKEDLDAHFGSSVAELVDGVSKLDKLKFRDRKEAQAENFRKMVLAMVQDIRVILIKLADRTPNMRTLGALRPDKKRRIARETLEIYAPLAHRLGIHNIKTELEELGFEALYPNRYRVLKEVVKAARGNRKEMIQRIHSEIEGRLQEVGLPARVVGREKNLFSIYNKMKTKEQRFHTIMDIYAFRIVVDTADTCYRVLGQVHSLYKPRPARMKDYIAVPKANGYQSLHTSMVGPHGVPVEVQIRTEDMDQMADKGVAAHWSYKANSERGGTTAQIKAQRWMQSLLELQQSAGNSFEFIENVKSDLFPDEIYVFTPKGRIVELPMGATAVDFAYAVHTDIGNTCVGARVDRTPYPLSQSLKSGQTVEIISAPGARPNAAWLNYVVTSRARTKIRQVLKTMRREDSITLGRRLLNHALGEHSVNEIAPENISKVLSDLKIASMDDLLAAIGLGELMSIVIARRLLGNADELTEPSKSGGNKNKLPIRGAEGILLTFANCCHPIPDDHIIAHVSPGRGLVVHRETCPNVRGYQKEPDKYMAVEWTKDYDQEFITELKVDMHNRQGALAELTNVISKTGSNIHGLSTEERDGRLYTVTVLLTTKDRVHLAGIMRKIRTMPHALKVRRRKN</sequence>
<proteinExistence type="evidence at protein level"/>
<feature type="chain" id="PRO_0000386418" description="Guanosine-3',5'-bis(diphosphate) 3'-pyrophosphohydrolase">
    <location>
        <begin position="1"/>
        <end position="705"/>
    </location>
</feature>
<feature type="domain" description="HD" evidence="3">
    <location>
        <begin position="45"/>
        <end position="144"/>
    </location>
</feature>
<feature type="domain" description="TGS" evidence="4">
    <location>
        <begin position="387"/>
        <end position="448"/>
    </location>
</feature>
<feature type="domain" description="ACT" evidence="2">
    <location>
        <begin position="631"/>
        <end position="705"/>
    </location>
</feature>
<protein>
    <recommendedName>
        <fullName>Guanosine-3',5'-bis(diphosphate) 3'-pyrophosphohydrolase</fullName>
        <ecNumber>3.1.7.2</ecNumber>
    </recommendedName>
    <alternativeName>
        <fullName>Penta-phosphate guanosine-3'-pyrophosphohydrolase</fullName>
        <shortName>(ppGpp)ase</shortName>
    </alternativeName>
</protein>
<name>SPOT_VIBCH</name>
<organism>
    <name type="scientific">Vibrio cholerae serotype O1 (strain ATCC 39315 / El Tor Inaba N16961)</name>
    <dbReference type="NCBI Taxonomy" id="243277"/>
    <lineage>
        <taxon>Bacteria</taxon>
        <taxon>Pseudomonadati</taxon>
        <taxon>Pseudomonadota</taxon>
        <taxon>Gammaproteobacteria</taxon>
        <taxon>Vibrionales</taxon>
        <taxon>Vibrionaceae</taxon>
        <taxon>Vibrio</taxon>
    </lineage>
</organism>